<evidence type="ECO:0000255" key="1">
    <source>
        <dbReference type="HAMAP-Rule" id="MF_00715"/>
    </source>
</evidence>
<accession>A5U9R7</accession>
<organism>
    <name type="scientific">Haemophilus influenzae (strain PittEE)</name>
    <dbReference type="NCBI Taxonomy" id="374930"/>
    <lineage>
        <taxon>Bacteria</taxon>
        <taxon>Pseudomonadati</taxon>
        <taxon>Pseudomonadota</taxon>
        <taxon>Gammaproteobacteria</taxon>
        <taxon>Pasteurellales</taxon>
        <taxon>Pasteurellaceae</taxon>
        <taxon>Haemophilus</taxon>
    </lineage>
</organism>
<protein>
    <recommendedName>
        <fullName evidence="1">Protein SlyX homolog</fullName>
    </recommendedName>
</protein>
<feature type="chain" id="PRO_1000045715" description="Protein SlyX homolog">
    <location>
        <begin position="1"/>
        <end position="73"/>
    </location>
</feature>
<proteinExistence type="inferred from homology"/>
<comment type="similarity">
    <text evidence="1">Belongs to the SlyX family.</text>
</comment>
<gene>
    <name evidence="1" type="primary">slyX</name>
    <name type="ordered locus">CGSHiEE_00100</name>
</gene>
<dbReference type="EMBL" id="CP000671">
    <property type="protein sequence ID" value="ABQ97518.1"/>
    <property type="molecule type" value="Genomic_DNA"/>
</dbReference>
<dbReference type="SMR" id="A5U9R7"/>
<dbReference type="KEGG" id="hip:CGSHiEE_00100"/>
<dbReference type="HOGENOM" id="CLU_180796_4_0_6"/>
<dbReference type="Gene3D" id="1.20.5.300">
    <property type="match status" value="1"/>
</dbReference>
<dbReference type="HAMAP" id="MF_00715">
    <property type="entry name" value="SlyX"/>
    <property type="match status" value="1"/>
</dbReference>
<dbReference type="InterPro" id="IPR007236">
    <property type="entry name" value="SlyX"/>
</dbReference>
<dbReference type="NCBIfam" id="NF002556">
    <property type="entry name" value="PRK02119.1"/>
    <property type="match status" value="1"/>
</dbReference>
<dbReference type="PANTHER" id="PTHR36508">
    <property type="entry name" value="PROTEIN SLYX"/>
    <property type="match status" value="1"/>
</dbReference>
<dbReference type="PANTHER" id="PTHR36508:SF1">
    <property type="entry name" value="PROTEIN SLYX"/>
    <property type="match status" value="1"/>
</dbReference>
<dbReference type="Pfam" id="PF04102">
    <property type="entry name" value="SlyX"/>
    <property type="match status" value="1"/>
</dbReference>
<name>SLYX_HAEIE</name>
<reference key="1">
    <citation type="journal article" date="2007" name="Genome Biol.">
        <title>Characterization and modeling of the Haemophilus influenzae core and supragenomes based on the complete genomic sequences of Rd and 12 clinical nontypeable strains.</title>
        <authorList>
            <person name="Hogg J.S."/>
            <person name="Hu F.Z."/>
            <person name="Janto B."/>
            <person name="Boissy R."/>
            <person name="Hayes J."/>
            <person name="Keefe R."/>
            <person name="Post J.C."/>
            <person name="Ehrlich G.D."/>
        </authorList>
    </citation>
    <scope>NUCLEOTIDE SEQUENCE [LARGE SCALE GENOMIC DNA]</scope>
    <source>
        <strain>PittEE</strain>
    </source>
</reference>
<sequence>MQIQQMLENRIEELEMKIAFQEQLLDELNHALVQQQFDIDKMQVQLRYMANKLKDFQPSNIASQSEETPPPHY</sequence>